<protein>
    <recommendedName>
        <fullName evidence="1">Tyrosine--tRNA ligase</fullName>
        <ecNumber evidence="1">6.1.1.1</ecNumber>
    </recommendedName>
    <alternativeName>
        <fullName evidence="1">Tyrosyl-tRNA synthetase</fullName>
        <shortName evidence="1">TyrRS</shortName>
    </alternativeName>
</protein>
<gene>
    <name evidence="1" type="primary">tyrS</name>
    <name type="ordered locus">BPSL2904</name>
</gene>
<proteinExistence type="inferred from homology"/>
<accession>Q63QX0</accession>
<evidence type="ECO:0000255" key="1">
    <source>
        <dbReference type="HAMAP-Rule" id="MF_02007"/>
    </source>
</evidence>
<keyword id="KW-0030">Aminoacyl-tRNA synthetase</keyword>
<keyword id="KW-0067">ATP-binding</keyword>
<keyword id="KW-0963">Cytoplasm</keyword>
<keyword id="KW-0436">Ligase</keyword>
<keyword id="KW-0547">Nucleotide-binding</keyword>
<keyword id="KW-0648">Protein biosynthesis</keyword>
<keyword id="KW-1185">Reference proteome</keyword>
<keyword id="KW-0694">RNA-binding</keyword>
<organism>
    <name type="scientific">Burkholderia pseudomallei (strain K96243)</name>
    <dbReference type="NCBI Taxonomy" id="272560"/>
    <lineage>
        <taxon>Bacteria</taxon>
        <taxon>Pseudomonadati</taxon>
        <taxon>Pseudomonadota</taxon>
        <taxon>Betaproteobacteria</taxon>
        <taxon>Burkholderiales</taxon>
        <taxon>Burkholderiaceae</taxon>
        <taxon>Burkholderia</taxon>
        <taxon>pseudomallei group</taxon>
    </lineage>
</organism>
<feature type="chain" id="PRO_0000236701" description="Tyrosine--tRNA ligase">
    <location>
        <begin position="1"/>
        <end position="413"/>
    </location>
</feature>
<feature type="domain" description="S4 RNA-binding" evidence="1">
    <location>
        <begin position="351"/>
        <end position="411"/>
    </location>
</feature>
<feature type="short sequence motif" description="'HIGH' region">
    <location>
        <begin position="59"/>
        <end position="68"/>
    </location>
</feature>
<feature type="short sequence motif" description="'KMSKS' region">
    <location>
        <begin position="243"/>
        <end position="247"/>
    </location>
</feature>
<feature type="binding site" evidence="1">
    <location>
        <position position="246"/>
    </location>
    <ligand>
        <name>ATP</name>
        <dbReference type="ChEBI" id="CHEBI:30616"/>
    </ligand>
</feature>
<dbReference type="EC" id="6.1.1.1" evidence="1"/>
<dbReference type="EMBL" id="BX571965">
    <property type="protein sequence ID" value="CAH36914.1"/>
    <property type="molecule type" value="Genomic_DNA"/>
</dbReference>
<dbReference type="RefSeq" id="WP_004533566.1">
    <property type="nucleotide sequence ID" value="NZ_CP009538.1"/>
</dbReference>
<dbReference type="RefSeq" id="YP_109498.1">
    <property type="nucleotide sequence ID" value="NC_006350.1"/>
</dbReference>
<dbReference type="SMR" id="Q63QX0"/>
<dbReference type="STRING" id="272560.BPSL2904"/>
<dbReference type="GeneID" id="93061499"/>
<dbReference type="KEGG" id="bps:BPSL2904"/>
<dbReference type="PATRIC" id="fig|272560.51.peg.2385"/>
<dbReference type="eggNOG" id="COG0162">
    <property type="taxonomic scope" value="Bacteria"/>
</dbReference>
<dbReference type="Proteomes" id="UP000000605">
    <property type="component" value="Chromosome 1"/>
</dbReference>
<dbReference type="GO" id="GO:0005829">
    <property type="term" value="C:cytosol"/>
    <property type="evidence" value="ECO:0007669"/>
    <property type="project" value="TreeGrafter"/>
</dbReference>
<dbReference type="GO" id="GO:0005524">
    <property type="term" value="F:ATP binding"/>
    <property type="evidence" value="ECO:0007669"/>
    <property type="project" value="UniProtKB-UniRule"/>
</dbReference>
<dbReference type="GO" id="GO:0003723">
    <property type="term" value="F:RNA binding"/>
    <property type="evidence" value="ECO:0007669"/>
    <property type="project" value="UniProtKB-KW"/>
</dbReference>
<dbReference type="GO" id="GO:0004831">
    <property type="term" value="F:tyrosine-tRNA ligase activity"/>
    <property type="evidence" value="ECO:0007669"/>
    <property type="project" value="UniProtKB-UniRule"/>
</dbReference>
<dbReference type="GO" id="GO:0006437">
    <property type="term" value="P:tyrosyl-tRNA aminoacylation"/>
    <property type="evidence" value="ECO:0007669"/>
    <property type="project" value="UniProtKB-UniRule"/>
</dbReference>
<dbReference type="CDD" id="cd00165">
    <property type="entry name" value="S4"/>
    <property type="match status" value="1"/>
</dbReference>
<dbReference type="CDD" id="cd00805">
    <property type="entry name" value="TyrRS_core"/>
    <property type="match status" value="1"/>
</dbReference>
<dbReference type="FunFam" id="1.10.240.10:FF:000006">
    <property type="entry name" value="Tyrosine--tRNA ligase"/>
    <property type="match status" value="1"/>
</dbReference>
<dbReference type="FunFam" id="3.10.290.10:FF:000022">
    <property type="entry name" value="Tyrosine--tRNA ligase"/>
    <property type="match status" value="1"/>
</dbReference>
<dbReference type="FunFam" id="3.40.50.620:FF:000061">
    <property type="entry name" value="Tyrosine--tRNA ligase"/>
    <property type="match status" value="1"/>
</dbReference>
<dbReference type="Gene3D" id="3.40.50.620">
    <property type="entry name" value="HUPs"/>
    <property type="match status" value="1"/>
</dbReference>
<dbReference type="Gene3D" id="3.10.290.10">
    <property type="entry name" value="RNA-binding S4 domain"/>
    <property type="match status" value="1"/>
</dbReference>
<dbReference type="Gene3D" id="1.10.240.10">
    <property type="entry name" value="Tyrosyl-Transfer RNA Synthetase"/>
    <property type="match status" value="1"/>
</dbReference>
<dbReference type="HAMAP" id="MF_02007">
    <property type="entry name" value="Tyr_tRNA_synth_type2"/>
    <property type="match status" value="1"/>
</dbReference>
<dbReference type="InterPro" id="IPR001412">
    <property type="entry name" value="aa-tRNA-synth_I_CS"/>
</dbReference>
<dbReference type="InterPro" id="IPR002305">
    <property type="entry name" value="aa-tRNA-synth_Ic"/>
</dbReference>
<dbReference type="InterPro" id="IPR014729">
    <property type="entry name" value="Rossmann-like_a/b/a_fold"/>
</dbReference>
<dbReference type="InterPro" id="IPR002942">
    <property type="entry name" value="S4_RNA-bd"/>
</dbReference>
<dbReference type="InterPro" id="IPR036986">
    <property type="entry name" value="S4_RNA-bd_sf"/>
</dbReference>
<dbReference type="InterPro" id="IPR002307">
    <property type="entry name" value="Tyr-tRNA-ligase"/>
</dbReference>
<dbReference type="InterPro" id="IPR024088">
    <property type="entry name" value="Tyr-tRNA-ligase_bac-type"/>
</dbReference>
<dbReference type="InterPro" id="IPR024108">
    <property type="entry name" value="Tyr-tRNA-ligase_bac_2"/>
</dbReference>
<dbReference type="NCBIfam" id="TIGR00234">
    <property type="entry name" value="tyrS"/>
    <property type="match status" value="1"/>
</dbReference>
<dbReference type="PANTHER" id="PTHR11766:SF1">
    <property type="entry name" value="TYROSINE--TRNA LIGASE"/>
    <property type="match status" value="1"/>
</dbReference>
<dbReference type="PANTHER" id="PTHR11766">
    <property type="entry name" value="TYROSYL-TRNA SYNTHETASE"/>
    <property type="match status" value="1"/>
</dbReference>
<dbReference type="Pfam" id="PF01479">
    <property type="entry name" value="S4"/>
    <property type="match status" value="1"/>
</dbReference>
<dbReference type="Pfam" id="PF00579">
    <property type="entry name" value="tRNA-synt_1b"/>
    <property type="match status" value="1"/>
</dbReference>
<dbReference type="PRINTS" id="PR01040">
    <property type="entry name" value="TRNASYNTHTYR"/>
</dbReference>
<dbReference type="SMART" id="SM00363">
    <property type="entry name" value="S4"/>
    <property type="match status" value="1"/>
</dbReference>
<dbReference type="SUPFAM" id="SSF55174">
    <property type="entry name" value="Alpha-L RNA-binding motif"/>
    <property type="match status" value="1"/>
</dbReference>
<dbReference type="SUPFAM" id="SSF52374">
    <property type="entry name" value="Nucleotidylyl transferase"/>
    <property type="match status" value="1"/>
</dbReference>
<dbReference type="PROSITE" id="PS00178">
    <property type="entry name" value="AA_TRNA_LIGASE_I"/>
    <property type="match status" value="1"/>
</dbReference>
<dbReference type="PROSITE" id="PS50889">
    <property type="entry name" value="S4"/>
    <property type="match status" value="1"/>
</dbReference>
<sequence length="413" mass="45718">MSTDPTSKPAFPITDEVRHALAVTKRGVDELLIEEEFAQKLAKSAATDKPLRIKLGLDPTAPDIHLGHTVVLNKMRQLQDLGHTVIFLIGDFTSLIGDPSGRNATRPPLTREQIESNAKTYFEQAALVLDREKTEIRYNSEWSMPLGADGMIKLASRYTVARMLEREDFTKRFQGGIPISIHEFLYPLMQGYDSVALNADLELGGTDQKFNLLVGRELQKQYGQEQQCILTMPLLEGLDGVEKMSKSKGNYVGISEKPTDMFGKLMSISDVLMWRYFELLSFRSLDEIARFRGEAEGGRNPRDFKVMLAQEIVARFHSQADAERALEDFNHRAKGGVPDDIPAVTLAGAPLAIGQLLKQAGLVPSTSEALRNIEQGGVKIDGATVSDKALKVDAGEFVVQVGKRRFARVTLTA</sequence>
<comment type="function">
    <text evidence="1">Catalyzes the attachment of tyrosine to tRNA(Tyr) in a two-step reaction: tyrosine is first activated by ATP to form Tyr-AMP and then transferred to the acceptor end of tRNA(Tyr).</text>
</comment>
<comment type="catalytic activity">
    <reaction evidence="1">
        <text>tRNA(Tyr) + L-tyrosine + ATP = L-tyrosyl-tRNA(Tyr) + AMP + diphosphate + H(+)</text>
        <dbReference type="Rhea" id="RHEA:10220"/>
        <dbReference type="Rhea" id="RHEA-COMP:9706"/>
        <dbReference type="Rhea" id="RHEA-COMP:9707"/>
        <dbReference type="ChEBI" id="CHEBI:15378"/>
        <dbReference type="ChEBI" id="CHEBI:30616"/>
        <dbReference type="ChEBI" id="CHEBI:33019"/>
        <dbReference type="ChEBI" id="CHEBI:58315"/>
        <dbReference type="ChEBI" id="CHEBI:78442"/>
        <dbReference type="ChEBI" id="CHEBI:78536"/>
        <dbReference type="ChEBI" id="CHEBI:456215"/>
        <dbReference type="EC" id="6.1.1.1"/>
    </reaction>
</comment>
<comment type="subunit">
    <text evidence="1">Homodimer.</text>
</comment>
<comment type="subcellular location">
    <subcellularLocation>
        <location evidence="1">Cytoplasm</location>
    </subcellularLocation>
</comment>
<comment type="similarity">
    <text evidence="1">Belongs to the class-I aminoacyl-tRNA synthetase family. TyrS type 2 subfamily.</text>
</comment>
<reference key="1">
    <citation type="journal article" date="2004" name="Proc. Natl. Acad. Sci. U.S.A.">
        <title>Genomic plasticity of the causative agent of melioidosis, Burkholderia pseudomallei.</title>
        <authorList>
            <person name="Holden M.T.G."/>
            <person name="Titball R.W."/>
            <person name="Peacock S.J."/>
            <person name="Cerdeno-Tarraga A.-M."/>
            <person name="Atkins T."/>
            <person name="Crossman L.C."/>
            <person name="Pitt T."/>
            <person name="Churcher C."/>
            <person name="Mungall K.L."/>
            <person name="Bentley S.D."/>
            <person name="Sebaihia M."/>
            <person name="Thomson N.R."/>
            <person name="Bason N."/>
            <person name="Beacham I.R."/>
            <person name="Brooks K."/>
            <person name="Brown K.A."/>
            <person name="Brown N.F."/>
            <person name="Challis G.L."/>
            <person name="Cherevach I."/>
            <person name="Chillingworth T."/>
            <person name="Cronin A."/>
            <person name="Crossett B."/>
            <person name="Davis P."/>
            <person name="DeShazer D."/>
            <person name="Feltwell T."/>
            <person name="Fraser A."/>
            <person name="Hance Z."/>
            <person name="Hauser H."/>
            <person name="Holroyd S."/>
            <person name="Jagels K."/>
            <person name="Keith K.E."/>
            <person name="Maddison M."/>
            <person name="Moule S."/>
            <person name="Price C."/>
            <person name="Quail M.A."/>
            <person name="Rabbinowitsch E."/>
            <person name="Rutherford K."/>
            <person name="Sanders M."/>
            <person name="Simmonds M."/>
            <person name="Songsivilai S."/>
            <person name="Stevens K."/>
            <person name="Tumapa S."/>
            <person name="Vesaratchavest M."/>
            <person name="Whitehead S."/>
            <person name="Yeats C."/>
            <person name="Barrell B.G."/>
            <person name="Oyston P.C.F."/>
            <person name="Parkhill J."/>
        </authorList>
    </citation>
    <scope>NUCLEOTIDE SEQUENCE [LARGE SCALE GENOMIC DNA]</scope>
    <source>
        <strain>K96243</strain>
    </source>
</reference>
<name>SYY_BURPS</name>